<reference key="1">
    <citation type="submission" date="2008-12" db="EMBL/GenBank/DDBJ databases">
        <title>Complete sequence of chromosome of Shewanella baltica OS223.</title>
        <authorList>
            <consortium name="US DOE Joint Genome Institute"/>
            <person name="Lucas S."/>
            <person name="Copeland A."/>
            <person name="Lapidus A."/>
            <person name="Glavina del Rio T."/>
            <person name="Dalin E."/>
            <person name="Tice H."/>
            <person name="Bruce D."/>
            <person name="Goodwin L."/>
            <person name="Pitluck S."/>
            <person name="Chertkov O."/>
            <person name="Meincke L."/>
            <person name="Brettin T."/>
            <person name="Detter J.C."/>
            <person name="Han C."/>
            <person name="Kuske C.R."/>
            <person name="Larimer F."/>
            <person name="Land M."/>
            <person name="Hauser L."/>
            <person name="Kyrpides N."/>
            <person name="Ovchinnikova G."/>
            <person name="Brettar I."/>
            <person name="Rodrigues J."/>
            <person name="Konstantinidis K."/>
            <person name="Tiedje J."/>
        </authorList>
    </citation>
    <scope>NUCLEOTIDE SEQUENCE [LARGE SCALE GENOMIC DNA]</scope>
    <source>
        <strain>OS223</strain>
    </source>
</reference>
<proteinExistence type="inferred from homology"/>
<gene>
    <name evidence="1" type="primary">mutS</name>
    <name type="ordered locus">Sbal223_1246</name>
</gene>
<feature type="chain" id="PRO_1000118691" description="DNA mismatch repair protein MutS">
    <location>
        <begin position="1"/>
        <end position="856"/>
    </location>
</feature>
<feature type="binding site" evidence="1">
    <location>
        <begin position="618"/>
        <end position="625"/>
    </location>
    <ligand>
        <name>ATP</name>
        <dbReference type="ChEBI" id="CHEBI:30616"/>
    </ligand>
</feature>
<sequence length="856" mass="95263">MNVIDTDDLEKHTPMMRQYLTMKAEHHDMLLFYRMGDFYELFYDDAKRASELLGISLTARGKSGGDPIPMAGLPYHAVEGYLAKLVQIGQSVAICEQIGDPATSKGPVERKVVRIVTPGTLTDEALLQERQDNLLAAVYQGKIGFGYATLDVSSGRFVIAELDTRESLEAELQRTNPVEILYSEDFGELGLLNGFKGKRRRPEWEFDYDTSIKLLLAQFGTKDLHGFGIADARLSLQAAGCLMQYVKDTQRTALPHINAITRFNQTDSIVLDAATRRNLELTQNLAGGRDNTLAAVLDNTATPMGSRMLQRWIHQPLRDPKHIKARQQAVTELLDTAAHEGLHEQLKALGDIERIMARLALRTARPRDFARLRQALGLLPELQQSLSTLSAPHTTQLRQHLGEFPAEQALLERAIVDNPPMLIRDGGVIREGYNSELDEWRGLSEGASDYLVQLEAREKERTGINTLKVGYNRVHGYYIEVSRLQSSQVPLNYQRRQTLKNMERYITPELKEYEEKVLSSQGKALALEKQLWEQLFDLILPKLHELQAFARAAAELDVLSNFAERAETLGYTCPELSQDIGVQIEAGRHPVVERVSQTPFIANPVTLHNQRRMLIVTGPNMGGKSTYMRQVALITLMAHIGCFVPADCALIGPIDRIFTRIGASDDLASGRSTFMVEMTETANILHNATASSLVLMDEIGRGTSTYDGLSLAWSAAEYLAQQVGAMTLFATHYFELTQLPELMAGVYNVHLDAIEHDDTIAFMHAVQEGAASKSYGLQVAALAGVPNKVIKAAKHKLQQLESRDHQAEGTRTPIQSLLALPEPVENPALTKLSSINPDNLTPKQALDLLYELKRLS</sequence>
<name>MUTS_SHEB2</name>
<evidence type="ECO:0000255" key="1">
    <source>
        <dbReference type="HAMAP-Rule" id="MF_00096"/>
    </source>
</evidence>
<organism>
    <name type="scientific">Shewanella baltica (strain OS223)</name>
    <dbReference type="NCBI Taxonomy" id="407976"/>
    <lineage>
        <taxon>Bacteria</taxon>
        <taxon>Pseudomonadati</taxon>
        <taxon>Pseudomonadota</taxon>
        <taxon>Gammaproteobacteria</taxon>
        <taxon>Alteromonadales</taxon>
        <taxon>Shewanellaceae</taxon>
        <taxon>Shewanella</taxon>
    </lineage>
</organism>
<keyword id="KW-0067">ATP-binding</keyword>
<keyword id="KW-0227">DNA damage</keyword>
<keyword id="KW-0234">DNA repair</keyword>
<keyword id="KW-0238">DNA-binding</keyword>
<keyword id="KW-0547">Nucleotide-binding</keyword>
<dbReference type="EMBL" id="CP001252">
    <property type="protein sequence ID" value="ACK45756.1"/>
    <property type="molecule type" value="Genomic_DNA"/>
</dbReference>
<dbReference type="RefSeq" id="WP_012587107.1">
    <property type="nucleotide sequence ID" value="NC_011663.1"/>
</dbReference>
<dbReference type="SMR" id="B8E8U0"/>
<dbReference type="KEGG" id="sbp:Sbal223_1246"/>
<dbReference type="HOGENOM" id="CLU_002472_4_0_6"/>
<dbReference type="Proteomes" id="UP000002507">
    <property type="component" value="Chromosome"/>
</dbReference>
<dbReference type="GO" id="GO:0005829">
    <property type="term" value="C:cytosol"/>
    <property type="evidence" value="ECO:0007669"/>
    <property type="project" value="TreeGrafter"/>
</dbReference>
<dbReference type="GO" id="GO:0005524">
    <property type="term" value="F:ATP binding"/>
    <property type="evidence" value="ECO:0007669"/>
    <property type="project" value="UniProtKB-UniRule"/>
</dbReference>
<dbReference type="GO" id="GO:0140664">
    <property type="term" value="F:ATP-dependent DNA damage sensor activity"/>
    <property type="evidence" value="ECO:0007669"/>
    <property type="project" value="InterPro"/>
</dbReference>
<dbReference type="GO" id="GO:0003684">
    <property type="term" value="F:damaged DNA binding"/>
    <property type="evidence" value="ECO:0007669"/>
    <property type="project" value="UniProtKB-UniRule"/>
</dbReference>
<dbReference type="GO" id="GO:0030983">
    <property type="term" value="F:mismatched DNA binding"/>
    <property type="evidence" value="ECO:0007669"/>
    <property type="project" value="InterPro"/>
</dbReference>
<dbReference type="GO" id="GO:0006298">
    <property type="term" value="P:mismatch repair"/>
    <property type="evidence" value="ECO:0007669"/>
    <property type="project" value="UniProtKB-UniRule"/>
</dbReference>
<dbReference type="CDD" id="cd03284">
    <property type="entry name" value="ABC_MutS1"/>
    <property type="match status" value="1"/>
</dbReference>
<dbReference type="FunFam" id="1.10.1420.10:FF:000002">
    <property type="entry name" value="DNA mismatch repair protein MutS"/>
    <property type="match status" value="1"/>
</dbReference>
<dbReference type="FunFam" id="3.30.420.110:FF:000001">
    <property type="entry name" value="DNA mismatch repair protein MutS"/>
    <property type="match status" value="1"/>
</dbReference>
<dbReference type="FunFam" id="3.40.1170.10:FF:000001">
    <property type="entry name" value="DNA mismatch repair protein MutS"/>
    <property type="match status" value="1"/>
</dbReference>
<dbReference type="FunFam" id="3.40.50.300:FF:000283">
    <property type="entry name" value="DNA mismatch repair protein MutS"/>
    <property type="match status" value="1"/>
</dbReference>
<dbReference type="Gene3D" id="1.10.1420.10">
    <property type="match status" value="2"/>
</dbReference>
<dbReference type="Gene3D" id="6.10.140.430">
    <property type="match status" value="1"/>
</dbReference>
<dbReference type="Gene3D" id="3.40.1170.10">
    <property type="entry name" value="DNA repair protein MutS, domain I"/>
    <property type="match status" value="1"/>
</dbReference>
<dbReference type="Gene3D" id="3.30.420.110">
    <property type="entry name" value="MutS, connector domain"/>
    <property type="match status" value="1"/>
</dbReference>
<dbReference type="Gene3D" id="3.40.50.300">
    <property type="entry name" value="P-loop containing nucleotide triphosphate hydrolases"/>
    <property type="match status" value="1"/>
</dbReference>
<dbReference type="HAMAP" id="MF_00096">
    <property type="entry name" value="MutS"/>
    <property type="match status" value="1"/>
</dbReference>
<dbReference type="InterPro" id="IPR005748">
    <property type="entry name" value="DNA_mismatch_repair_MutS"/>
</dbReference>
<dbReference type="InterPro" id="IPR007695">
    <property type="entry name" value="DNA_mismatch_repair_MutS-lik_N"/>
</dbReference>
<dbReference type="InterPro" id="IPR017261">
    <property type="entry name" value="DNA_mismatch_repair_MutS/MSH"/>
</dbReference>
<dbReference type="InterPro" id="IPR000432">
    <property type="entry name" value="DNA_mismatch_repair_MutS_C"/>
</dbReference>
<dbReference type="InterPro" id="IPR007861">
    <property type="entry name" value="DNA_mismatch_repair_MutS_clamp"/>
</dbReference>
<dbReference type="InterPro" id="IPR007696">
    <property type="entry name" value="DNA_mismatch_repair_MutS_core"/>
</dbReference>
<dbReference type="InterPro" id="IPR016151">
    <property type="entry name" value="DNA_mismatch_repair_MutS_N"/>
</dbReference>
<dbReference type="InterPro" id="IPR036187">
    <property type="entry name" value="DNA_mismatch_repair_MutS_sf"/>
</dbReference>
<dbReference type="InterPro" id="IPR007860">
    <property type="entry name" value="DNA_mmatch_repair_MutS_con_dom"/>
</dbReference>
<dbReference type="InterPro" id="IPR045076">
    <property type="entry name" value="MutS"/>
</dbReference>
<dbReference type="InterPro" id="IPR036678">
    <property type="entry name" value="MutS_con_dom_sf"/>
</dbReference>
<dbReference type="InterPro" id="IPR027417">
    <property type="entry name" value="P-loop_NTPase"/>
</dbReference>
<dbReference type="NCBIfam" id="TIGR01070">
    <property type="entry name" value="mutS1"/>
    <property type="match status" value="1"/>
</dbReference>
<dbReference type="NCBIfam" id="NF003810">
    <property type="entry name" value="PRK05399.1"/>
    <property type="match status" value="1"/>
</dbReference>
<dbReference type="PANTHER" id="PTHR11361:SF34">
    <property type="entry name" value="DNA MISMATCH REPAIR PROTEIN MSH1, MITOCHONDRIAL"/>
    <property type="match status" value="1"/>
</dbReference>
<dbReference type="PANTHER" id="PTHR11361">
    <property type="entry name" value="DNA MISMATCH REPAIR PROTEIN MUTS FAMILY MEMBER"/>
    <property type="match status" value="1"/>
</dbReference>
<dbReference type="Pfam" id="PF01624">
    <property type="entry name" value="MutS_I"/>
    <property type="match status" value="1"/>
</dbReference>
<dbReference type="Pfam" id="PF05188">
    <property type="entry name" value="MutS_II"/>
    <property type="match status" value="1"/>
</dbReference>
<dbReference type="Pfam" id="PF05192">
    <property type="entry name" value="MutS_III"/>
    <property type="match status" value="1"/>
</dbReference>
<dbReference type="Pfam" id="PF05190">
    <property type="entry name" value="MutS_IV"/>
    <property type="match status" value="1"/>
</dbReference>
<dbReference type="Pfam" id="PF00488">
    <property type="entry name" value="MutS_V"/>
    <property type="match status" value="1"/>
</dbReference>
<dbReference type="PIRSF" id="PIRSF037677">
    <property type="entry name" value="DNA_mis_repair_Msh6"/>
    <property type="match status" value="1"/>
</dbReference>
<dbReference type="SMART" id="SM00534">
    <property type="entry name" value="MUTSac"/>
    <property type="match status" value="1"/>
</dbReference>
<dbReference type="SMART" id="SM00533">
    <property type="entry name" value="MUTSd"/>
    <property type="match status" value="1"/>
</dbReference>
<dbReference type="SUPFAM" id="SSF55271">
    <property type="entry name" value="DNA repair protein MutS, domain I"/>
    <property type="match status" value="1"/>
</dbReference>
<dbReference type="SUPFAM" id="SSF53150">
    <property type="entry name" value="DNA repair protein MutS, domain II"/>
    <property type="match status" value="1"/>
</dbReference>
<dbReference type="SUPFAM" id="SSF48334">
    <property type="entry name" value="DNA repair protein MutS, domain III"/>
    <property type="match status" value="1"/>
</dbReference>
<dbReference type="SUPFAM" id="SSF52540">
    <property type="entry name" value="P-loop containing nucleoside triphosphate hydrolases"/>
    <property type="match status" value="1"/>
</dbReference>
<dbReference type="PROSITE" id="PS00486">
    <property type="entry name" value="DNA_MISMATCH_REPAIR_2"/>
    <property type="match status" value="1"/>
</dbReference>
<comment type="function">
    <text evidence="1">This protein is involved in the repair of mismatches in DNA. It is possible that it carries out the mismatch recognition step. This protein has a weak ATPase activity.</text>
</comment>
<comment type="similarity">
    <text evidence="1">Belongs to the DNA mismatch repair MutS family.</text>
</comment>
<protein>
    <recommendedName>
        <fullName evidence="1">DNA mismatch repair protein MutS</fullName>
    </recommendedName>
</protein>
<accession>B8E8U0</accession>